<sequence>MALETFVNSEPFTFGVELEIQVVNTHNYDLTKAASDLMRLIQGETFPGNITPEITESMIELSTGICHSHEQAVSELHAIRDVLVKAADQLNVGLAGGGTHAFQQWSDRQIYDAPRFQYISELYGYLAKQFTVFGQHVHIGCPDPDSALFLLHSMSRFIPHFIALSASSPFVQNVDTGFHSARLNSVFAFPLSGRAPFVLTWDSFEEYFTKMVNTGVVNSMKDFYWDIRPKPGYGTIEVRVMDTPLSVDRAAAIACYIQTLARYLLTDRPLKLSEDDYLVYTFNRFEACRFGLEGTCVNPQTGERRTIAEDILDTLDRIAPHAAALGSRAALDEIGALANARVNDASWLRTVFKQEKSLNETVRQQCLRWRE</sequence>
<accession>Q39L14</accession>
<protein>
    <recommendedName>
        <fullName evidence="1">Putative glutamate--cysteine ligase 2</fullName>
        <ecNumber evidence="1">6.3.2.2</ecNumber>
    </recommendedName>
    <alternativeName>
        <fullName evidence="1">Gamma-glutamylcysteine synthetase 2</fullName>
        <shortName evidence="1">GCS 2</shortName>
        <shortName evidence="1">Gamma-GCS 2</shortName>
    </alternativeName>
</protein>
<comment type="function">
    <text evidence="1">ATP-dependent carboxylate-amine ligase which exhibits weak glutamate--cysteine ligase activity.</text>
</comment>
<comment type="catalytic activity">
    <reaction evidence="1">
        <text>L-cysteine + L-glutamate + ATP = gamma-L-glutamyl-L-cysteine + ADP + phosphate + H(+)</text>
        <dbReference type="Rhea" id="RHEA:13285"/>
        <dbReference type="ChEBI" id="CHEBI:15378"/>
        <dbReference type="ChEBI" id="CHEBI:29985"/>
        <dbReference type="ChEBI" id="CHEBI:30616"/>
        <dbReference type="ChEBI" id="CHEBI:35235"/>
        <dbReference type="ChEBI" id="CHEBI:43474"/>
        <dbReference type="ChEBI" id="CHEBI:58173"/>
        <dbReference type="ChEBI" id="CHEBI:456216"/>
        <dbReference type="EC" id="6.3.2.2"/>
    </reaction>
</comment>
<comment type="similarity">
    <text evidence="1">Belongs to the glutamate--cysteine ligase type 2 family. YbdK subfamily.</text>
</comment>
<dbReference type="EC" id="6.3.2.2" evidence="1"/>
<dbReference type="EMBL" id="CP000151">
    <property type="protein sequence ID" value="ABB06852.1"/>
    <property type="molecule type" value="Genomic_DNA"/>
</dbReference>
<dbReference type="RefSeq" id="WP_011350492.1">
    <property type="nucleotide sequence ID" value="NC_007510.1"/>
</dbReference>
<dbReference type="SMR" id="Q39L14"/>
<dbReference type="GeneID" id="45093159"/>
<dbReference type="KEGG" id="bur:Bcep18194_A3250"/>
<dbReference type="PATRIC" id="fig|482957.22.peg.77"/>
<dbReference type="HOGENOM" id="CLU_044848_1_1_4"/>
<dbReference type="Proteomes" id="UP000002705">
    <property type="component" value="Chromosome 1"/>
</dbReference>
<dbReference type="GO" id="GO:0005524">
    <property type="term" value="F:ATP binding"/>
    <property type="evidence" value="ECO:0007669"/>
    <property type="project" value="UniProtKB-KW"/>
</dbReference>
<dbReference type="GO" id="GO:0004357">
    <property type="term" value="F:glutamate-cysteine ligase activity"/>
    <property type="evidence" value="ECO:0007669"/>
    <property type="project" value="UniProtKB-EC"/>
</dbReference>
<dbReference type="GO" id="GO:0042398">
    <property type="term" value="P:modified amino acid biosynthetic process"/>
    <property type="evidence" value="ECO:0007669"/>
    <property type="project" value="InterPro"/>
</dbReference>
<dbReference type="Gene3D" id="3.30.590.20">
    <property type="match status" value="1"/>
</dbReference>
<dbReference type="HAMAP" id="MF_01609">
    <property type="entry name" value="Glu_cys_ligase_2"/>
    <property type="match status" value="1"/>
</dbReference>
<dbReference type="InterPro" id="IPR050141">
    <property type="entry name" value="GCL_type2/YbdK_subfam"/>
</dbReference>
<dbReference type="InterPro" id="IPR006336">
    <property type="entry name" value="GCS2"/>
</dbReference>
<dbReference type="InterPro" id="IPR014746">
    <property type="entry name" value="Gln_synth/guanido_kin_cat_dom"/>
</dbReference>
<dbReference type="InterPro" id="IPR011793">
    <property type="entry name" value="YbdK"/>
</dbReference>
<dbReference type="NCBIfam" id="TIGR02050">
    <property type="entry name" value="gshA_cyan_rel"/>
    <property type="match status" value="1"/>
</dbReference>
<dbReference type="NCBIfam" id="NF010040">
    <property type="entry name" value="PRK13516.1"/>
    <property type="match status" value="1"/>
</dbReference>
<dbReference type="PANTHER" id="PTHR36510">
    <property type="entry name" value="GLUTAMATE--CYSTEINE LIGASE 2-RELATED"/>
    <property type="match status" value="1"/>
</dbReference>
<dbReference type="PANTHER" id="PTHR36510:SF1">
    <property type="entry name" value="GLUTAMATE--CYSTEINE LIGASE 2-RELATED"/>
    <property type="match status" value="1"/>
</dbReference>
<dbReference type="Pfam" id="PF04107">
    <property type="entry name" value="GCS2"/>
    <property type="match status" value="1"/>
</dbReference>
<dbReference type="SUPFAM" id="SSF55931">
    <property type="entry name" value="Glutamine synthetase/guanido kinase"/>
    <property type="match status" value="1"/>
</dbReference>
<proteinExistence type="inferred from homology"/>
<name>GCS2_BURL3</name>
<reference key="1">
    <citation type="submission" date="2005-10" db="EMBL/GenBank/DDBJ databases">
        <title>Complete sequence of chromosome 1 of Burkholderia sp. 383.</title>
        <authorList>
            <consortium name="US DOE Joint Genome Institute"/>
            <person name="Copeland A."/>
            <person name="Lucas S."/>
            <person name="Lapidus A."/>
            <person name="Barry K."/>
            <person name="Detter J.C."/>
            <person name="Glavina T."/>
            <person name="Hammon N."/>
            <person name="Israni S."/>
            <person name="Pitluck S."/>
            <person name="Chain P."/>
            <person name="Malfatti S."/>
            <person name="Shin M."/>
            <person name="Vergez L."/>
            <person name="Schmutz J."/>
            <person name="Larimer F."/>
            <person name="Land M."/>
            <person name="Kyrpides N."/>
            <person name="Lykidis A."/>
            <person name="Richardson P."/>
        </authorList>
    </citation>
    <scope>NUCLEOTIDE SEQUENCE [LARGE SCALE GENOMIC DNA]</scope>
    <source>
        <strain>ATCC 17760 / DSM 23089 / LMG 22485 / NCIMB 9086 / R18194 / 383</strain>
    </source>
</reference>
<feature type="chain" id="PRO_0000255795" description="Putative glutamate--cysteine ligase 2">
    <location>
        <begin position="1"/>
        <end position="371"/>
    </location>
</feature>
<evidence type="ECO:0000255" key="1">
    <source>
        <dbReference type="HAMAP-Rule" id="MF_01609"/>
    </source>
</evidence>
<keyword id="KW-0067">ATP-binding</keyword>
<keyword id="KW-0436">Ligase</keyword>
<keyword id="KW-0547">Nucleotide-binding</keyword>
<organism>
    <name type="scientific">Burkholderia lata (strain ATCC 17760 / DSM 23089 / LMG 22485 / NCIMB 9086 / R18194 / 383)</name>
    <dbReference type="NCBI Taxonomy" id="482957"/>
    <lineage>
        <taxon>Bacteria</taxon>
        <taxon>Pseudomonadati</taxon>
        <taxon>Pseudomonadota</taxon>
        <taxon>Betaproteobacteria</taxon>
        <taxon>Burkholderiales</taxon>
        <taxon>Burkholderiaceae</taxon>
        <taxon>Burkholderia</taxon>
        <taxon>Burkholderia cepacia complex</taxon>
    </lineage>
</organism>
<gene>
    <name type="ordered locus">Bcep18194_A3250</name>
</gene>